<accession>Q64202</accession>
<protein>
    <recommendedName>
        <fullName>Homeobox protein DLX-1</fullName>
    </recommendedName>
</protein>
<feature type="chain" id="PRO_0000049022" description="Homeobox protein DLX-1">
    <location>
        <begin position="1" status="less than"/>
        <end position="44" status="greater than"/>
    </location>
</feature>
<feature type="region of interest" description="Disordered" evidence="3">
    <location>
        <begin position="19"/>
        <end position="44"/>
    </location>
</feature>
<feature type="non-terminal residue">
    <location>
        <position position="1"/>
    </location>
</feature>
<feature type="non-terminal residue">
    <location>
        <position position="44"/>
    </location>
</feature>
<gene>
    <name type="primary">Dlx1</name>
</gene>
<name>DLX1_RAT</name>
<comment type="function">
    <text evidence="1 2">Plays a role as a transcriptional activator or repressor. Inhibits several cytokine signaling pathways, such as TGFB1, activin-A/INHBA and BMP4 by interfering with the transcriptional stimulatory activity of transcription factors, such as MSX2, FAST2, SMAD2 and SMAD3 during hematopoietic cell differentiation. Plays a role in terminal differentiation of interneurons, such as amacrine and bipolar cells in the developing retina. Likely to play a regulatory role in the development of the ventral forebrain. May play a role in craniofacial patterning and morphogenesis and may be involved in the early development of diencephalic subdivisions.</text>
</comment>
<comment type="subunit">
    <text evidence="1 2">Interacts with SMAD4 (via homeobox DNA-binding domain). Interacts (via homeobox DNA-binding domain) with POU4F2; this interaction suppresses DLX1-mediated transcriptional activity in postnatal retina and enhances retinal ganglion cell (RGC) differentiation.</text>
</comment>
<comment type="subcellular location">
    <subcellularLocation>
        <location evidence="1">Nucleus</location>
    </subcellularLocation>
</comment>
<comment type="domain">
    <text evidence="1">The homeobox DNA-binding domain is necessary for its nuclear localization, transcriptional and erythroid differentiation activities.</text>
</comment>
<comment type="similarity">
    <text evidence="4">Belongs to the distal-less homeobox family.</text>
</comment>
<proteinExistence type="evidence at transcript level"/>
<sequence>KLMKQGGAALEGSALANGRALSAGSPPVPPGWNRIPPLGRAQEE</sequence>
<organism>
    <name type="scientific">Rattus norvegicus</name>
    <name type="common">Rat</name>
    <dbReference type="NCBI Taxonomy" id="10116"/>
    <lineage>
        <taxon>Eukaryota</taxon>
        <taxon>Metazoa</taxon>
        <taxon>Chordata</taxon>
        <taxon>Craniata</taxon>
        <taxon>Vertebrata</taxon>
        <taxon>Euteleostomi</taxon>
        <taxon>Mammalia</taxon>
        <taxon>Eutheria</taxon>
        <taxon>Euarchontoglires</taxon>
        <taxon>Glires</taxon>
        <taxon>Rodentia</taxon>
        <taxon>Myomorpha</taxon>
        <taxon>Muroidea</taxon>
        <taxon>Muridae</taxon>
        <taxon>Murinae</taxon>
        <taxon>Rattus</taxon>
    </lineage>
</organism>
<evidence type="ECO:0000250" key="1">
    <source>
        <dbReference type="UniProtKB" id="P56177"/>
    </source>
</evidence>
<evidence type="ECO:0000250" key="2">
    <source>
        <dbReference type="UniProtKB" id="Q64317"/>
    </source>
</evidence>
<evidence type="ECO:0000256" key="3">
    <source>
        <dbReference type="SAM" id="MobiDB-lite"/>
    </source>
</evidence>
<evidence type="ECO:0000305" key="4"/>
<keyword id="KW-0010">Activator</keyword>
<keyword id="KW-0217">Developmental protein</keyword>
<keyword id="KW-0221">Differentiation</keyword>
<keyword id="KW-0238">DNA-binding</keyword>
<keyword id="KW-0371">Homeobox</keyword>
<keyword id="KW-0539">Nucleus</keyword>
<keyword id="KW-1185">Reference proteome</keyword>
<keyword id="KW-0678">Repressor</keyword>
<keyword id="KW-0804">Transcription</keyword>
<keyword id="KW-0805">Transcription regulation</keyword>
<dbReference type="EMBL" id="S81923">
    <property type="protein sequence ID" value="AAP32272.1"/>
    <property type="molecule type" value="mRNA"/>
</dbReference>
<dbReference type="STRING" id="10116.ENSRNOP00000002078"/>
<dbReference type="PhosphoSitePlus" id="Q64202"/>
<dbReference type="PaxDb" id="10116-ENSRNOP00000002078"/>
<dbReference type="UCSC" id="RGD:1309593">
    <property type="organism name" value="rat"/>
</dbReference>
<dbReference type="AGR" id="RGD:1309593"/>
<dbReference type="RGD" id="1309593">
    <property type="gene designation" value="Dlx1"/>
</dbReference>
<dbReference type="eggNOG" id="KOG0850">
    <property type="taxonomic scope" value="Eukaryota"/>
</dbReference>
<dbReference type="InParanoid" id="Q64202"/>
<dbReference type="Proteomes" id="UP000002494">
    <property type="component" value="Unplaced"/>
</dbReference>
<dbReference type="GO" id="GO:0005634">
    <property type="term" value="C:nucleus"/>
    <property type="evidence" value="ECO:0000250"/>
    <property type="project" value="UniProtKB"/>
</dbReference>
<dbReference type="GO" id="GO:0003682">
    <property type="term" value="F:chromatin binding"/>
    <property type="evidence" value="ECO:0000266"/>
    <property type="project" value="RGD"/>
</dbReference>
<dbReference type="GO" id="GO:0003677">
    <property type="term" value="F:DNA binding"/>
    <property type="evidence" value="ECO:0000266"/>
    <property type="project" value="RGD"/>
</dbReference>
<dbReference type="GO" id="GO:0000981">
    <property type="term" value="F:DNA-binding transcription factor activity, RNA polymerase II-specific"/>
    <property type="evidence" value="ECO:0000266"/>
    <property type="project" value="RGD"/>
</dbReference>
<dbReference type="GO" id="GO:0000977">
    <property type="term" value="F:RNA polymerase II transcription regulatory region sequence-specific DNA binding"/>
    <property type="evidence" value="ECO:0000266"/>
    <property type="project" value="RGD"/>
</dbReference>
<dbReference type="GO" id="GO:1990837">
    <property type="term" value="F:sequence-specific double-stranded DNA binding"/>
    <property type="evidence" value="ECO:0000266"/>
    <property type="project" value="RGD"/>
</dbReference>
<dbReference type="GO" id="GO:0071773">
    <property type="term" value="P:cellular response to BMP stimulus"/>
    <property type="evidence" value="ECO:0000250"/>
    <property type="project" value="UniProtKB"/>
</dbReference>
<dbReference type="GO" id="GO:0071560">
    <property type="term" value="P:cellular response to transforming growth factor beta stimulus"/>
    <property type="evidence" value="ECO:0000250"/>
    <property type="project" value="UniProtKB"/>
</dbReference>
<dbReference type="GO" id="GO:0021892">
    <property type="term" value="P:cerebral cortex GABAergic interneuron differentiation"/>
    <property type="evidence" value="ECO:0000266"/>
    <property type="project" value="RGD"/>
</dbReference>
<dbReference type="GO" id="GO:0021893">
    <property type="term" value="P:cerebral cortex GABAergic interneuron fate commitment"/>
    <property type="evidence" value="ECO:0000266"/>
    <property type="project" value="RGD"/>
</dbReference>
<dbReference type="GO" id="GO:0048706">
    <property type="term" value="P:embryonic skeletal system development"/>
    <property type="evidence" value="ECO:0000266"/>
    <property type="project" value="RGD"/>
</dbReference>
<dbReference type="GO" id="GO:0021879">
    <property type="term" value="P:forebrain neuron differentiation"/>
    <property type="evidence" value="ECO:0000266"/>
    <property type="project" value="RGD"/>
</dbReference>
<dbReference type="GO" id="GO:0097154">
    <property type="term" value="P:GABAergic neuron differentiation"/>
    <property type="evidence" value="ECO:0000266"/>
    <property type="project" value="RGD"/>
</dbReference>
<dbReference type="GO" id="GO:0021766">
    <property type="term" value="P:hippocampus development"/>
    <property type="evidence" value="ECO:0000266"/>
    <property type="project" value="RGD"/>
</dbReference>
<dbReference type="GO" id="GO:0030514">
    <property type="term" value="P:negative regulation of BMP signaling pathway"/>
    <property type="evidence" value="ECO:0000250"/>
    <property type="project" value="UniProtKB"/>
</dbReference>
<dbReference type="GO" id="GO:1903845">
    <property type="term" value="P:negative regulation of cellular response to transforming growth factor beta stimulus"/>
    <property type="evidence" value="ECO:0000250"/>
    <property type="project" value="UniProtKB"/>
</dbReference>
<dbReference type="GO" id="GO:0043524">
    <property type="term" value="P:negative regulation of neuron apoptotic process"/>
    <property type="evidence" value="ECO:0000266"/>
    <property type="project" value="RGD"/>
</dbReference>
<dbReference type="GO" id="GO:0045746">
    <property type="term" value="P:negative regulation of Notch signaling pathway"/>
    <property type="evidence" value="ECO:0000266"/>
    <property type="project" value="RGD"/>
</dbReference>
<dbReference type="GO" id="GO:0048715">
    <property type="term" value="P:negative regulation of oligodendrocyte differentiation"/>
    <property type="evidence" value="ECO:0000266"/>
    <property type="project" value="RGD"/>
</dbReference>
<dbReference type="GO" id="GO:0046533">
    <property type="term" value="P:negative regulation of photoreceptor cell differentiation"/>
    <property type="evidence" value="ECO:0000250"/>
    <property type="project" value="UniProtKB"/>
</dbReference>
<dbReference type="GO" id="GO:0000122">
    <property type="term" value="P:negative regulation of transcription by RNA polymerase II"/>
    <property type="evidence" value="ECO:0000250"/>
    <property type="project" value="UniProtKB"/>
</dbReference>
<dbReference type="GO" id="GO:0014016">
    <property type="term" value="P:neuroblast differentiation"/>
    <property type="evidence" value="ECO:0000266"/>
    <property type="project" value="RGD"/>
</dbReference>
<dbReference type="GO" id="GO:0051402">
    <property type="term" value="P:neuron apoptotic process"/>
    <property type="evidence" value="ECO:0000266"/>
    <property type="project" value="RGD"/>
</dbReference>
<dbReference type="GO" id="GO:0007219">
    <property type="term" value="P:Notch signaling pathway"/>
    <property type="evidence" value="ECO:0000266"/>
    <property type="project" value="RGD"/>
</dbReference>
<dbReference type="GO" id="GO:0042475">
    <property type="term" value="P:odontogenesis of dentin-containing tooth"/>
    <property type="evidence" value="ECO:0000266"/>
    <property type="project" value="RGD"/>
</dbReference>
<dbReference type="GO" id="GO:0048709">
    <property type="term" value="P:oligodendrocyte differentiation"/>
    <property type="evidence" value="ECO:0000266"/>
    <property type="project" value="RGD"/>
</dbReference>
<dbReference type="GO" id="GO:1902871">
    <property type="term" value="P:positive regulation of amacrine cell differentiation"/>
    <property type="evidence" value="ECO:0000250"/>
    <property type="project" value="UniProtKB"/>
</dbReference>
<dbReference type="GO" id="GO:0045597">
    <property type="term" value="P:positive regulation of cell differentiation"/>
    <property type="evidence" value="ECO:0000250"/>
    <property type="project" value="UniProtKB"/>
</dbReference>
<dbReference type="GO" id="GO:0045944">
    <property type="term" value="P:positive regulation of transcription by RNA polymerase II"/>
    <property type="evidence" value="ECO:0000250"/>
    <property type="project" value="UniProtKB"/>
</dbReference>
<dbReference type="GO" id="GO:0009954">
    <property type="term" value="P:proximal/distal pattern formation"/>
    <property type="evidence" value="ECO:0000266"/>
    <property type="project" value="RGD"/>
</dbReference>
<dbReference type="GO" id="GO:0006357">
    <property type="term" value="P:regulation of transcription by RNA polymerase II"/>
    <property type="evidence" value="ECO:0000266"/>
    <property type="project" value="RGD"/>
</dbReference>
<dbReference type="GO" id="GO:0021544">
    <property type="term" value="P:subpallium development"/>
    <property type="evidence" value="ECO:0000266"/>
    <property type="project" value="RGD"/>
</dbReference>
<reference key="1">
    <citation type="journal article" date="1995" name="J. Neurosci.">
        <title>Fibroblast growth factor 2 increases Otx2 expression in precursor cells from mammalian telencephalon.</title>
        <authorList>
            <person name="Robel L."/>
            <person name="Ding M."/>
            <person name="James A.J."/>
            <person name="Lin X."/>
            <person name="Simeone A."/>
            <person name="Leckman J.F."/>
            <person name="Vaccarino F.M."/>
        </authorList>
    </citation>
    <scope>NUCLEOTIDE SEQUENCE [MRNA]</scope>
</reference>